<evidence type="ECO:0000255" key="1">
    <source>
        <dbReference type="HAMAP-Rule" id="MF_00394"/>
    </source>
</evidence>
<proteinExistence type="inferred from homology"/>
<accession>Q3ZYV3</accession>
<comment type="function">
    <text evidence="1">Catalyzes the reduction of the glycolytic intermediate dihydroxyacetone phosphate (DHAP) to sn-glycerol 3-phosphate (G3P), the key precursor for phospholipid synthesis.</text>
</comment>
<comment type="catalytic activity">
    <reaction evidence="1">
        <text>sn-glycerol 3-phosphate + NAD(+) = dihydroxyacetone phosphate + NADH + H(+)</text>
        <dbReference type="Rhea" id="RHEA:11092"/>
        <dbReference type="ChEBI" id="CHEBI:15378"/>
        <dbReference type="ChEBI" id="CHEBI:57540"/>
        <dbReference type="ChEBI" id="CHEBI:57597"/>
        <dbReference type="ChEBI" id="CHEBI:57642"/>
        <dbReference type="ChEBI" id="CHEBI:57945"/>
        <dbReference type="EC" id="1.1.1.94"/>
    </reaction>
    <physiologicalReaction direction="right-to-left" evidence="1">
        <dbReference type="Rhea" id="RHEA:11094"/>
    </physiologicalReaction>
</comment>
<comment type="catalytic activity">
    <reaction evidence="1">
        <text>sn-glycerol 3-phosphate + NADP(+) = dihydroxyacetone phosphate + NADPH + H(+)</text>
        <dbReference type="Rhea" id="RHEA:11096"/>
        <dbReference type="ChEBI" id="CHEBI:15378"/>
        <dbReference type="ChEBI" id="CHEBI:57597"/>
        <dbReference type="ChEBI" id="CHEBI:57642"/>
        <dbReference type="ChEBI" id="CHEBI:57783"/>
        <dbReference type="ChEBI" id="CHEBI:58349"/>
        <dbReference type="EC" id="1.1.1.94"/>
    </reaction>
    <physiologicalReaction direction="right-to-left" evidence="1">
        <dbReference type="Rhea" id="RHEA:11098"/>
    </physiologicalReaction>
</comment>
<comment type="pathway">
    <text evidence="1">Membrane lipid metabolism; glycerophospholipid metabolism.</text>
</comment>
<comment type="subcellular location">
    <subcellularLocation>
        <location evidence="1">Cytoplasm</location>
    </subcellularLocation>
</comment>
<comment type="similarity">
    <text evidence="1">Belongs to the NAD-dependent glycerol-3-phosphate dehydrogenase family.</text>
</comment>
<feature type="chain" id="PRO_0000255304" description="Glycerol-3-phosphate dehydrogenase [NAD(P)+]">
    <location>
        <begin position="1"/>
        <end position="359"/>
    </location>
</feature>
<feature type="active site" description="Proton acceptor" evidence="1">
    <location>
        <position position="193"/>
    </location>
</feature>
<feature type="binding site" evidence="1">
    <location>
        <position position="11"/>
    </location>
    <ligand>
        <name>NADPH</name>
        <dbReference type="ChEBI" id="CHEBI:57783"/>
    </ligand>
</feature>
<feature type="binding site" evidence="1">
    <location>
        <position position="12"/>
    </location>
    <ligand>
        <name>NADPH</name>
        <dbReference type="ChEBI" id="CHEBI:57783"/>
    </ligand>
</feature>
<feature type="binding site" evidence="1">
    <location>
        <position position="32"/>
    </location>
    <ligand>
        <name>NADPH</name>
        <dbReference type="ChEBI" id="CHEBI:57783"/>
    </ligand>
</feature>
<feature type="binding site" evidence="1">
    <location>
        <position position="107"/>
    </location>
    <ligand>
        <name>NADPH</name>
        <dbReference type="ChEBI" id="CHEBI:57783"/>
    </ligand>
</feature>
<feature type="binding site" evidence="1">
    <location>
        <position position="107"/>
    </location>
    <ligand>
        <name>sn-glycerol 3-phosphate</name>
        <dbReference type="ChEBI" id="CHEBI:57597"/>
    </ligand>
</feature>
<feature type="binding site" evidence="1">
    <location>
        <position position="138"/>
    </location>
    <ligand>
        <name>sn-glycerol 3-phosphate</name>
        <dbReference type="ChEBI" id="CHEBI:57597"/>
    </ligand>
</feature>
<feature type="binding site" evidence="1">
    <location>
        <position position="142"/>
    </location>
    <ligand>
        <name>NADPH</name>
        <dbReference type="ChEBI" id="CHEBI:57783"/>
    </ligand>
</feature>
<feature type="binding site" evidence="1">
    <location>
        <position position="193"/>
    </location>
    <ligand>
        <name>sn-glycerol 3-phosphate</name>
        <dbReference type="ChEBI" id="CHEBI:57597"/>
    </ligand>
</feature>
<feature type="binding site" evidence="1">
    <location>
        <position position="246"/>
    </location>
    <ligand>
        <name>sn-glycerol 3-phosphate</name>
        <dbReference type="ChEBI" id="CHEBI:57597"/>
    </ligand>
</feature>
<feature type="binding site" evidence="1">
    <location>
        <position position="256"/>
    </location>
    <ligand>
        <name>sn-glycerol 3-phosphate</name>
        <dbReference type="ChEBI" id="CHEBI:57597"/>
    </ligand>
</feature>
<feature type="binding site" evidence="1">
    <location>
        <position position="257"/>
    </location>
    <ligand>
        <name>NADPH</name>
        <dbReference type="ChEBI" id="CHEBI:57783"/>
    </ligand>
</feature>
<feature type="binding site" evidence="1">
    <location>
        <position position="257"/>
    </location>
    <ligand>
        <name>sn-glycerol 3-phosphate</name>
        <dbReference type="ChEBI" id="CHEBI:57597"/>
    </ligand>
</feature>
<feature type="binding site" evidence="1">
    <location>
        <position position="258"/>
    </location>
    <ligand>
        <name>sn-glycerol 3-phosphate</name>
        <dbReference type="ChEBI" id="CHEBI:57597"/>
    </ligand>
</feature>
<feature type="binding site" evidence="1">
    <location>
        <position position="281"/>
    </location>
    <ligand>
        <name>NADPH</name>
        <dbReference type="ChEBI" id="CHEBI:57783"/>
    </ligand>
</feature>
<feature type="binding site" evidence="1">
    <location>
        <position position="283"/>
    </location>
    <ligand>
        <name>NADPH</name>
        <dbReference type="ChEBI" id="CHEBI:57783"/>
    </ligand>
</feature>
<name>GPDA_DEHMC</name>
<protein>
    <recommendedName>
        <fullName evidence="1">Glycerol-3-phosphate dehydrogenase [NAD(P)+]</fullName>
        <ecNumber evidence="1">1.1.1.94</ecNumber>
    </recommendedName>
    <alternativeName>
        <fullName evidence="1">NAD(P)(+)-dependent glycerol-3-phosphate dehydrogenase</fullName>
    </alternativeName>
    <alternativeName>
        <fullName evidence="1">NAD(P)H-dependent dihydroxyacetone-phosphate reductase</fullName>
    </alternativeName>
</protein>
<gene>
    <name evidence="1" type="primary">gpsA</name>
    <name type="ordered locus">cbdbA1356</name>
</gene>
<dbReference type="EC" id="1.1.1.94" evidence="1"/>
<dbReference type="EMBL" id="AJ965256">
    <property type="protein sequence ID" value="CAI83405.1"/>
    <property type="molecule type" value="Genomic_DNA"/>
</dbReference>
<dbReference type="RefSeq" id="WP_011309756.1">
    <property type="nucleotide sequence ID" value="NC_007356.1"/>
</dbReference>
<dbReference type="SMR" id="Q3ZYV3"/>
<dbReference type="KEGG" id="deh:cbdbA1356"/>
<dbReference type="HOGENOM" id="CLU_033449_0_2_0"/>
<dbReference type="UniPathway" id="UPA00940"/>
<dbReference type="Proteomes" id="UP000000433">
    <property type="component" value="Chromosome"/>
</dbReference>
<dbReference type="GO" id="GO:0005829">
    <property type="term" value="C:cytosol"/>
    <property type="evidence" value="ECO:0007669"/>
    <property type="project" value="TreeGrafter"/>
</dbReference>
<dbReference type="GO" id="GO:0047952">
    <property type="term" value="F:glycerol-3-phosphate dehydrogenase [NAD(P)+] activity"/>
    <property type="evidence" value="ECO:0007669"/>
    <property type="project" value="UniProtKB-UniRule"/>
</dbReference>
<dbReference type="GO" id="GO:0051287">
    <property type="term" value="F:NAD binding"/>
    <property type="evidence" value="ECO:0007669"/>
    <property type="project" value="InterPro"/>
</dbReference>
<dbReference type="GO" id="GO:0005975">
    <property type="term" value="P:carbohydrate metabolic process"/>
    <property type="evidence" value="ECO:0007669"/>
    <property type="project" value="InterPro"/>
</dbReference>
<dbReference type="GO" id="GO:0046167">
    <property type="term" value="P:glycerol-3-phosphate biosynthetic process"/>
    <property type="evidence" value="ECO:0007669"/>
    <property type="project" value="UniProtKB-UniRule"/>
</dbReference>
<dbReference type="GO" id="GO:0046168">
    <property type="term" value="P:glycerol-3-phosphate catabolic process"/>
    <property type="evidence" value="ECO:0007669"/>
    <property type="project" value="InterPro"/>
</dbReference>
<dbReference type="GO" id="GO:0006650">
    <property type="term" value="P:glycerophospholipid metabolic process"/>
    <property type="evidence" value="ECO:0007669"/>
    <property type="project" value="UniProtKB-UniRule"/>
</dbReference>
<dbReference type="GO" id="GO:0008654">
    <property type="term" value="P:phospholipid biosynthetic process"/>
    <property type="evidence" value="ECO:0007669"/>
    <property type="project" value="UniProtKB-KW"/>
</dbReference>
<dbReference type="FunFam" id="1.10.1040.10:FF:000001">
    <property type="entry name" value="Glycerol-3-phosphate dehydrogenase [NAD(P)+]"/>
    <property type="match status" value="1"/>
</dbReference>
<dbReference type="FunFam" id="3.40.50.720:FF:000019">
    <property type="entry name" value="Glycerol-3-phosphate dehydrogenase [NAD(P)+]"/>
    <property type="match status" value="1"/>
</dbReference>
<dbReference type="Gene3D" id="1.10.1040.10">
    <property type="entry name" value="N-(1-d-carboxylethyl)-l-norvaline Dehydrogenase, domain 2"/>
    <property type="match status" value="1"/>
</dbReference>
<dbReference type="Gene3D" id="3.40.50.720">
    <property type="entry name" value="NAD(P)-binding Rossmann-like Domain"/>
    <property type="match status" value="1"/>
</dbReference>
<dbReference type="HAMAP" id="MF_00394">
    <property type="entry name" value="NAD_Glyc3P_dehydrog"/>
    <property type="match status" value="1"/>
</dbReference>
<dbReference type="InterPro" id="IPR008927">
    <property type="entry name" value="6-PGluconate_DH-like_C_sf"/>
</dbReference>
<dbReference type="InterPro" id="IPR013328">
    <property type="entry name" value="6PGD_dom2"/>
</dbReference>
<dbReference type="InterPro" id="IPR006168">
    <property type="entry name" value="G3P_DH_NAD-dep"/>
</dbReference>
<dbReference type="InterPro" id="IPR006109">
    <property type="entry name" value="G3P_DH_NAD-dep_C"/>
</dbReference>
<dbReference type="InterPro" id="IPR011128">
    <property type="entry name" value="G3P_DH_NAD-dep_N"/>
</dbReference>
<dbReference type="InterPro" id="IPR036291">
    <property type="entry name" value="NAD(P)-bd_dom_sf"/>
</dbReference>
<dbReference type="NCBIfam" id="NF000940">
    <property type="entry name" value="PRK00094.1-2"/>
    <property type="match status" value="1"/>
</dbReference>
<dbReference type="NCBIfam" id="NF000942">
    <property type="entry name" value="PRK00094.1-4"/>
    <property type="match status" value="1"/>
</dbReference>
<dbReference type="PANTHER" id="PTHR11728">
    <property type="entry name" value="GLYCEROL-3-PHOSPHATE DEHYDROGENASE"/>
    <property type="match status" value="1"/>
</dbReference>
<dbReference type="PANTHER" id="PTHR11728:SF1">
    <property type="entry name" value="GLYCEROL-3-PHOSPHATE DEHYDROGENASE [NAD(+)] 2, CHLOROPLASTIC"/>
    <property type="match status" value="1"/>
</dbReference>
<dbReference type="Pfam" id="PF07479">
    <property type="entry name" value="NAD_Gly3P_dh_C"/>
    <property type="match status" value="1"/>
</dbReference>
<dbReference type="Pfam" id="PF01210">
    <property type="entry name" value="NAD_Gly3P_dh_N"/>
    <property type="match status" value="1"/>
</dbReference>
<dbReference type="PIRSF" id="PIRSF000114">
    <property type="entry name" value="Glycerol-3-P_dh"/>
    <property type="match status" value="1"/>
</dbReference>
<dbReference type="PRINTS" id="PR00077">
    <property type="entry name" value="GPDHDRGNASE"/>
</dbReference>
<dbReference type="SUPFAM" id="SSF48179">
    <property type="entry name" value="6-phosphogluconate dehydrogenase C-terminal domain-like"/>
    <property type="match status" value="1"/>
</dbReference>
<dbReference type="SUPFAM" id="SSF51735">
    <property type="entry name" value="NAD(P)-binding Rossmann-fold domains"/>
    <property type="match status" value="1"/>
</dbReference>
<dbReference type="PROSITE" id="PS00957">
    <property type="entry name" value="NAD_G3PDH"/>
    <property type="match status" value="1"/>
</dbReference>
<organism>
    <name type="scientific">Dehalococcoides mccartyi (strain CBDB1)</name>
    <dbReference type="NCBI Taxonomy" id="255470"/>
    <lineage>
        <taxon>Bacteria</taxon>
        <taxon>Bacillati</taxon>
        <taxon>Chloroflexota</taxon>
        <taxon>Dehalococcoidia</taxon>
        <taxon>Dehalococcoidales</taxon>
        <taxon>Dehalococcoidaceae</taxon>
        <taxon>Dehalococcoides</taxon>
    </lineage>
</organism>
<keyword id="KW-0963">Cytoplasm</keyword>
<keyword id="KW-0444">Lipid biosynthesis</keyword>
<keyword id="KW-0443">Lipid metabolism</keyword>
<keyword id="KW-0520">NAD</keyword>
<keyword id="KW-0521">NADP</keyword>
<keyword id="KW-0547">Nucleotide-binding</keyword>
<keyword id="KW-0560">Oxidoreductase</keyword>
<keyword id="KW-0594">Phospholipid biosynthesis</keyword>
<keyword id="KW-1208">Phospholipid metabolism</keyword>
<reference key="1">
    <citation type="journal article" date="2005" name="Nat. Biotechnol.">
        <title>Genome sequence of the chlorinated compound-respiring bacterium Dehalococcoides species strain CBDB1.</title>
        <authorList>
            <person name="Kube M."/>
            <person name="Beck A."/>
            <person name="Zinder S.H."/>
            <person name="Kuhl H."/>
            <person name="Reinhardt R."/>
            <person name="Adrian L."/>
        </authorList>
    </citation>
    <scope>NUCLEOTIDE SEQUENCE [LARGE SCALE GENOMIC DNA]</scope>
    <source>
        <strain>CBDB1</strain>
    </source>
</reference>
<sequence length="359" mass="38539">MSKVCIIGTTTWGITLGTIIAHKGREVMLWARTEDEAMLLSTQRRPADFLPENYHFPEFMNVTACLEEAVAGADMVLLAVPSQRMRPNIRLVAPLLTKSMLICSAAKGLEIGTAKRMSQVITDEISPDFAKNICVLSGPNLAMEILKGLPAVTVLAADTEKTAKKAAKLITAANFSAYTNTDIIGVELGGSLKNIIALGAGIVDGLNLGNNAKSALITRGLTEISALGAALGANPLTLSGLAGLGDLIATCSSNLSRNHFVGVELTKGRSLNDIMYNMSNVAEGVSTTAVAYEMARSMDLEMPVTENIYNVLYNNADPKEAARILMDAQATHELAGRKWNLFKMFRKRKARKTPELNPD</sequence>